<keyword id="KW-0966">Cell projection</keyword>
<keyword id="KW-0963">Cytoplasm</keyword>
<keyword id="KW-0221">Differentiation</keyword>
<keyword id="KW-0378">Hydrolase</keyword>
<keyword id="KW-0391">Immunity</keyword>
<keyword id="KW-0399">Innate immunity</keyword>
<keyword id="KW-0496">Mitochondrion</keyword>
<keyword id="KW-0520">NAD</keyword>
<keyword id="KW-0524">Neurogenesis</keyword>
<keyword id="KW-0597">Phosphoprotein</keyword>
<keyword id="KW-1185">Reference proteome</keyword>
<keyword id="KW-0677">Repeat</keyword>
<keyword id="KW-0770">Synapse</keyword>
<keyword id="KW-0809">Transit peptide</keyword>
<reference key="1">
    <citation type="journal article" date="2013" name="Nature">
        <title>The zebrafish reference genome sequence and its relationship to the human genome.</title>
        <authorList>
            <person name="Howe K."/>
            <person name="Clark M.D."/>
            <person name="Torroja C.F."/>
            <person name="Torrance J."/>
            <person name="Berthelot C."/>
            <person name="Muffato M."/>
            <person name="Collins J.E."/>
            <person name="Humphray S."/>
            <person name="McLaren K."/>
            <person name="Matthews L."/>
            <person name="McLaren S."/>
            <person name="Sealy I."/>
            <person name="Caccamo M."/>
            <person name="Churcher C."/>
            <person name="Scott C."/>
            <person name="Barrett J.C."/>
            <person name="Koch R."/>
            <person name="Rauch G.J."/>
            <person name="White S."/>
            <person name="Chow W."/>
            <person name="Kilian B."/>
            <person name="Quintais L.T."/>
            <person name="Guerra-Assuncao J.A."/>
            <person name="Zhou Y."/>
            <person name="Gu Y."/>
            <person name="Yen J."/>
            <person name="Vogel J.H."/>
            <person name="Eyre T."/>
            <person name="Redmond S."/>
            <person name="Banerjee R."/>
            <person name="Chi J."/>
            <person name="Fu B."/>
            <person name="Langley E."/>
            <person name="Maguire S.F."/>
            <person name="Laird G.K."/>
            <person name="Lloyd D."/>
            <person name="Kenyon E."/>
            <person name="Donaldson S."/>
            <person name="Sehra H."/>
            <person name="Almeida-King J."/>
            <person name="Loveland J."/>
            <person name="Trevanion S."/>
            <person name="Jones M."/>
            <person name="Quail M."/>
            <person name="Willey D."/>
            <person name="Hunt A."/>
            <person name="Burton J."/>
            <person name="Sims S."/>
            <person name="McLay K."/>
            <person name="Plumb B."/>
            <person name="Davis J."/>
            <person name="Clee C."/>
            <person name="Oliver K."/>
            <person name="Clark R."/>
            <person name="Riddle C."/>
            <person name="Elliot D."/>
            <person name="Threadgold G."/>
            <person name="Harden G."/>
            <person name="Ware D."/>
            <person name="Begum S."/>
            <person name="Mortimore B."/>
            <person name="Kerry G."/>
            <person name="Heath P."/>
            <person name="Phillimore B."/>
            <person name="Tracey A."/>
            <person name="Corby N."/>
            <person name="Dunn M."/>
            <person name="Johnson C."/>
            <person name="Wood J."/>
            <person name="Clark S."/>
            <person name="Pelan S."/>
            <person name="Griffiths G."/>
            <person name="Smith M."/>
            <person name="Glithero R."/>
            <person name="Howden P."/>
            <person name="Barker N."/>
            <person name="Lloyd C."/>
            <person name="Stevens C."/>
            <person name="Harley J."/>
            <person name="Holt K."/>
            <person name="Panagiotidis G."/>
            <person name="Lovell J."/>
            <person name="Beasley H."/>
            <person name="Henderson C."/>
            <person name="Gordon D."/>
            <person name="Auger K."/>
            <person name="Wright D."/>
            <person name="Collins J."/>
            <person name="Raisen C."/>
            <person name="Dyer L."/>
            <person name="Leung K."/>
            <person name="Robertson L."/>
            <person name="Ambridge K."/>
            <person name="Leongamornlert D."/>
            <person name="McGuire S."/>
            <person name="Gilderthorp R."/>
            <person name="Griffiths C."/>
            <person name="Manthravadi D."/>
            <person name="Nichol S."/>
            <person name="Barker G."/>
            <person name="Whitehead S."/>
            <person name="Kay M."/>
            <person name="Brown J."/>
            <person name="Murnane C."/>
            <person name="Gray E."/>
            <person name="Humphries M."/>
            <person name="Sycamore N."/>
            <person name="Barker D."/>
            <person name="Saunders D."/>
            <person name="Wallis J."/>
            <person name="Babbage A."/>
            <person name="Hammond S."/>
            <person name="Mashreghi-Mohammadi M."/>
            <person name="Barr L."/>
            <person name="Martin S."/>
            <person name="Wray P."/>
            <person name="Ellington A."/>
            <person name="Matthews N."/>
            <person name="Ellwood M."/>
            <person name="Woodmansey R."/>
            <person name="Clark G."/>
            <person name="Cooper J."/>
            <person name="Tromans A."/>
            <person name="Grafham D."/>
            <person name="Skuce C."/>
            <person name="Pandian R."/>
            <person name="Andrews R."/>
            <person name="Harrison E."/>
            <person name="Kimberley A."/>
            <person name="Garnett J."/>
            <person name="Fosker N."/>
            <person name="Hall R."/>
            <person name="Garner P."/>
            <person name="Kelly D."/>
            <person name="Bird C."/>
            <person name="Palmer S."/>
            <person name="Gehring I."/>
            <person name="Berger A."/>
            <person name="Dooley C.M."/>
            <person name="Ersan-Urun Z."/>
            <person name="Eser C."/>
            <person name="Geiger H."/>
            <person name="Geisler M."/>
            <person name="Karotki L."/>
            <person name="Kirn A."/>
            <person name="Konantz J."/>
            <person name="Konantz M."/>
            <person name="Oberlander M."/>
            <person name="Rudolph-Geiger S."/>
            <person name="Teucke M."/>
            <person name="Lanz C."/>
            <person name="Raddatz G."/>
            <person name="Osoegawa K."/>
            <person name="Zhu B."/>
            <person name="Rapp A."/>
            <person name="Widaa S."/>
            <person name="Langford C."/>
            <person name="Yang F."/>
            <person name="Schuster S.C."/>
            <person name="Carter N.P."/>
            <person name="Harrow J."/>
            <person name="Ning Z."/>
            <person name="Herrero J."/>
            <person name="Searle S.M."/>
            <person name="Enright A."/>
            <person name="Geisler R."/>
            <person name="Plasterk R.H."/>
            <person name="Lee C."/>
            <person name="Westerfield M."/>
            <person name="de Jong P.J."/>
            <person name="Zon L.I."/>
            <person name="Postlethwait J.H."/>
            <person name="Nusslein-Volhard C."/>
            <person name="Hubbard T.J."/>
            <person name="Roest Crollius H."/>
            <person name="Rogers J."/>
            <person name="Stemple D.L."/>
        </authorList>
    </citation>
    <scope>NUCLEOTIDE SEQUENCE [LARGE SCALE GENOMIC DNA]</scope>
    <source>
        <strain>Tuebingen</strain>
    </source>
</reference>
<reference key="2">
    <citation type="submission" date="2008-04" db="EMBL/GenBank/DDBJ databases">
        <authorList>
            <consortium name="NIH - Zebrafish Gene Collection (ZGC) project"/>
        </authorList>
    </citation>
    <scope>NUCLEOTIDE SEQUENCE [LARGE SCALE MRNA]</scope>
</reference>
<reference key="3">
    <citation type="journal article" date="2004" name="Mol. Immunol.">
        <title>Expression analysis of the Toll-like receptor and TIR domain adaptor families of zebrafish.</title>
        <authorList>
            <person name="Meijer A.H."/>
            <person name="Krens S.F.G."/>
            <person name="Medina Rodriguez I.A."/>
            <person name="He S."/>
            <person name="Bitter W."/>
            <person name="Snaar-Jagalska B.E."/>
            <person name="Spaink H.P."/>
        </authorList>
    </citation>
    <scope>NUCLEOTIDE SEQUENCE [MRNA] OF 577-682</scope>
</reference>
<reference key="4">
    <citation type="journal article" date="2017" name="Neuron">
        <title>The SARM1 Toll/Interleukin-1 receptor domain possesses intrinsic NAD+ cleavage activity that promotes pathological axonal degeneration.</title>
        <authorList>
            <person name="Essuman K."/>
            <person name="Summers D.W."/>
            <person name="Sasaki Y."/>
            <person name="Mao X."/>
            <person name="DiAntonio A."/>
            <person name="Milbrandt J."/>
        </authorList>
    </citation>
    <scope>FUNCTION</scope>
    <scope>CATALYTIC ACTIVITY</scope>
</reference>
<reference key="5">
    <citation type="journal article" date="2020" name="Commun. Biol.">
        <title>Systemic loss of Sarm1 protects Schwann cells from chemotoxicity by delaying axon degeneration.</title>
        <authorList>
            <person name="Tian W."/>
            <person name="Czopka T."/>
            <person name="Lopez-Schier H."/>
        </authorList>
    </citation>
    <scope>FUNCTION</scope>
    <scope>DISRUPTION PHENOTYPE</scope>
</reference>
<reference key="6">
    <citation type="journal article" date="2020" name="MicroPubl. Biol.">
        <title>Blocking Wallerian degeneration by loss of Sarm1 does not promote axon resealing in zebrafish.</title>
        <authorList>
            <person name="Tian W."/>
            <person name="Lopez-Schier H."/>
        </authorList>
    </citation>
    <scope>DISRUPTION PHENOTYPE</scope>
</reference>
<dbReference type="EC" id="3.2.2.6" evidence="6"/>
<dbReference type="EC" id="3.2.2.-" evidence="2"/>
<dbReference type="EMBL" id="BX663513">
    <property type="status" value="NOT_ANNOTATED_CDS"/>
    <property type="molecule type" value="Genomic_DNA"/>
</dbReference>
<dbReference type="EMBL" id="CR522882">
    <property type="status" value="NOT_ANNOTATED_CDS"/>
    <property type="molecule type" value="Genomic_DNA"/>
</dbReference>
<dbReference type="EMBL" id="BC163770">
    <property type="protein sequence ID" value="AAI63770.1"/>
    <property type="molecule type" value="mRNA"/>
</dbReference>
<dbReference type="EMBL" id="AY389466">
    <property type="protein sequence ID" value="AAQ91327.1"/>
    <property type="molecule type" value="mRNA"/>
</dbReference>
<dbReference type="RefSeq" id="NP_001124068.1">
    <property type="nucleotide sequence ID" value="NM_001130596.1"/>
</dbReference>
<dbReference type="SMR" id="F1QWA8"/>
<dbReference type="FunCoup" id="F1QWA8">
    <property type="interactions" value="932"/>
</dbReference>
<dbReference type="STRING" id="7955.ENSDARP00000014434"/>
<dbReference type="PaxDb" id="7955-ENSDARP00000014434"/>
<dbReference type="Ensembl" id="ENSDART00000004200">
    <property type="protein sequence ID" value="ENSDARP00000014434"/>
    <property type="gene ID" value="ENSDARG00000010610"/>
</dbReference>
<dbReference type="GeneID" id="403143"/>
<dbReference type="KEGG" id="dre:403143"/>
<dbReference type="AGR" id="ZFIN:ZDB-GENE-040219-1"/>
<dbReference type="CTD" id="23098"/>
<dbReference type="ZFIN" id="ZDB-GENE-040219-1">
    <property type="gene designation" value="sarm1"/>
</dbReference>
<dbReference type="eggNOG" id="KOG3678">
    <property type="taxonomic scope" value="Eukaryota"/>
</dbReference>
<dbReference type="HOGENOM" id="CLU_003286_2_0_1"/>
<dbReference type="InParanoid" id="F1QWA8"/>
<dbReference type="OMA" id="KSCEVQT"/>
<dbReference type="OrthoDB" id="202764at2759"/>
<dbReference type="PhylomeDB" id="F1QWA8"/>
<dbReference type="TreeFam" id="TF315263"/>
<dbReference type="PRO" id="PR:F1QWA8"/>
<dbReference type="Proteomes" id="UP000000437">
    <property type="component" value="Chromosome 15"/>
</dbReference>
<dbReference type="Bgee" id="ENSDARG00000010610">
    <property type="expression patterns" value="Expressed in testis and 15 other cell types or tissues"/>
</dbReference>
<dbReference type="GO" id="GO:0030424">
    <property type="term" value="C:axon"/>
    <property type="evidence" value="ECO:0007669"/>
    <property type="project" value="UniProtKB-SubCell"/>
</dbReference>
<dbReference type="GO" id="GO:0030425">
    <property type="term" value="C:dendrite"/>
    <property type="evidence" value="ECO:0000318"/>
    <property type="project" value="GO_Central"/>
</dbReference>
<dbReference type="GO" id="GO:0005739">
    <property type="term" value="C:mitochondrion"/>
    <property type="evidence" value="ECO:0007669"/>
    <property type="project" value="UniProtKB-SubCell"/>
</dbReference>
<dbReference type="GO" id="GO:0045202">
    <property type="term" value="C:synapse"/>
    <property type="evidence" value="ECO:0007669"/>
    <property type="project" value="UniProtKB-SubCell"/>
</dbReference>
<dbReference type="GO" id="GO:0003953">
    <property type="term" value="F:NAD+ nucleosidase activity"/>
    <property type="evidence" value="ECO:0000314"/>
    <property type="project" value="UniProtKB"/>
</dbReference>
<dbReference type="GO" id="GO:0061809">
    <property type="term" value="F:NAD+ nucleosidase activity, cyclic ADP-ribose generating"/>
    <property type="evidence" value="ECO:0007669"/>
    <property type="project" value="UniProtKB-EC"/>
</dbReference>
<dbReference type="GO" id="GO:0050135">
    <property type="term" value="F:NADP+ nucleosidase activity"/>
    <property type="evidence" value="ECO:0007669"/>
    <property type="project" value="RHEA"/>
</dbReference>
<dbReference type="GO" id="GO:0035591">
    <property type="term" value="F:signaling adaptor activity"/>
    <property type="evidence" value="ECO:0007669"/>
    <property type="project" value="InterPro"/>
</dbReference>
<dbReference type="GO" id="GO:0030154">
    <property type="term" value="P:cell differentiation"/>
    <property type="evidence" value="ECO:0007669"/>
    <property type="project" value="UniProtKB-KW"/>
</dbReference>
<dbReference type="GO" id="GO:0045087">
    <property type="term" value="P:innate immune response"/>
    <property type="evidence" value="ECO:0007669"/>
    <property type="project" value="UniProtKB-KW"/>
</dbReference>
<dbReference type="GO" id="GO:0019677">
    <property type="term" value="P:NAD catabolic process"/>
    <property type="evidence" value="ECO:0000314"/>
    <property type="project" value="UniProtKB"/>
</dbReference>
<dbReference type="GO" id="GO:0034128">
    <property type="term" value="P:negative regulation of MyD88-independent toll-like receptor signaling pathway"/>
    <property type="evidence" value="ECO:0007669"/>
    <property type="project" value="InterPro"/>
</dbReference>
<dbReference type="GO" id="GO:0007399">
    <property type="term" value="P:nervous system development"/>
    <property type="evidence" value="ECO:0007669"/>
    <property type="project" value="UniProtKB-KW"/>
</dbReference>
<dbReference type="GO" id="GO:0048679">
    <property type="term" value="P:regulation of axon regeneration"/>
    <property type="evidence" value="ECO:0000315"/>
    <property type="project" value="ZFIN"/>
</dbReference>
<dbReference type="GO" id="GO:0048678">
    <property type="term" value="P:response to axon injury"/>
    <property type="evidence" value="ECO:0007669"/>
    <property type="project" value="InterPro"/>
</dbReference>
<dbReference type="GO" id="GO:0007165">
    <property type="term" value="P:signal transduction"/>
    <property type="evidence" value="ECO:0007669"/>
    <property type="project" value="InterPro"/>
</dbReference>
<dbReference type="CDD" id="cd09501">
    <property type="entry name" value="SAM_SARM1-like_repeat1"/>
    <property type="match status" value="1"/>
</dbReference>
<dbReference type="CDD" id="cd09502">
    <property type="entry name" value="SAM_SARM1-like_repeat2"/>
    <property type="match status" value="1"/>
</dbReference>
<dbReference type="CDD" id="cd24153">
    <property type="entry name" value="SARM1_N"/>
    <property type="match status" value="1"/>
</dbReference>
<dbReference type="FunFam" id="1.25.10.10:FF:000256">
    <property type="entry name" value="Sterile alpha and TIR motif containing 1"/>
    <property type="match status" value="1"/>
</dbReference>
<dbReference type="FunFam" id="1.10.150.50:FF:000043">
    <property type="entry name" value="Sterile alpha and TIR motif-containing 1"/>
    <property type="match status" value="1"/>
</dbReference>
<dbReference type="Gene3D" id="1.25.10.10">
    <property type="entry name" value="Leucine-rich Repeat Variant"/>
    <property type="match status" value="1"/>
</dbReference>
<dbReference type="Gene3D" id="3.40.50.10140">
    <property type="entry name" value="Toll/interleukin-1 receptor homology (TIR) domain"/>
    <property type="match status" value="1"/>
</dbReference>
<dbReference type="Gene3D" id="1.10.150.50">
    <property type="entry name" value="Transcription Factor, Ets-1"/>
    <property type="match status" value="2"/>
</dbReference>
<dbReference type="InterPro" id="IPR011989">
    <property type="entry name" value="ARM-like"/>
</dbReference>
<dbReference type="InterPro" id="IPR016024">
    <property type="entry name" value="ARM-type_fold"/>
</dbReference>
<dbReference type="InterPro" id="IPR001660">
    <property type="entry name" value="SAM"/>
</dbReference>
<dbReference type="InterPro" id="IPR013761">
    <property type="entry name" value="SAM/pointed_sf"/>
</dbReference>
<dbReference type="InterPro" id="IPR039184">
    <property type="entry name" value="SARM1"/>
</dbReference>
<dbReference type="InterPro" id="IPR000157">
    <property type="entry name" value="TIR_dom"/>
</dbReference>
<dbReference type="InterPro" id="IPR035897">
    <property type="entry name" value="Toll_tir_struct_dom_sf"/>
</dbReference>
<dbReference type="PANTHER" id="PTHR22998:SF1">
    <property type="entry name" value="NAD(+) HYDROLASE SARM1"/>
    <property type="match status" value="1"/>
</dbReference>
<dbReference type="PANTHER" id="PTHR22998">
    <property type="entry name" value="SARM1"/>
    <property type="match status" value="1"/>
</dbReference>
<dbReference type="Pfam" id="PF00536">
    <property type="entry name" value="SAM_1"/>
    <property type="match status" value="1"/>
</dbReference>
<dbReference type="Pfam" id="PF07647">
    <property type="entry name" value="SAM_2"/>
    <property type="match status" value="1"/>
</dbReference>
<dbReference type="Pfam" id="PF13676">
    <property type="entry name" value="TIR_2"/>
    <property type="match status" value="1"/>
</dbReference>
<dbReference type="SMART" id="SM00454">
    <property type="entry name" value="SAM"/>
    <property type="match status" value="2"/>
</dbReference>
<dbReference type="SMART" id="SM00255">
    <property type="entry name" value="TIR"/>
    <property type="match status" value="1"/>
</dbReference>
<dbReference type="SUPFAM" id="SSF48371">
    <property type="entry name" value="ARM repeat"/>
    <property type="match status" value="1"/>
</dbReference>
<dbReference type="SUPFAM" id="SSF47769">
    <property type="entry name" value="SAM/Pointed domain"/>
    <property type="match status" value="2"/>
</dbReference>
<dbReference type="SUPFAM" id="SSF52200">
    <property type="entry name" value="Toll/Interleukin receptor TIR domain"/>
    <property type="match status" value="1"/>
</dbReference>
<dbReference type="PROSITE" id="PS50105">
    <property type="entry name" value="SAM_DOMAIN"/>
    <property type="match status" value="1"/>
</dbReference>
<dbReference type="PROSITE" id="PS50104">
    <property type="entry name" value="TIR"/>
    <property type="match status" value="1"/>
</dbReference>
<accession>F1QWA8</accession>
<accession>B3DK97</accession>
<accession>Q6TQG1</accession>
<evidence type="ECO:0000250" key="1">
    <source>
        <dbReference type="UniProtKB" id="Q6PDS3"/>
    </source>
</evidence>
<evidence type="ECO:0000250" key="2">
    <source>
        <dbReference type="UniProtKB" id="Q6SZW1"/>
    </source>
</evidence>
<evidence type="ECO:0000255" key="3"/>
<evidence type="ECO:0000255" key="4">
    <source>
        <dbReference type="PROSITE-ProRule" id="PRU00184"/>
    </source>
</evidence>
<evidence type="ECO:0000255" key="5">
    <source>
        <dbReference type="PROSITE-ProRule" id="PRU00204"/>
    </source>
</evidence>
<evidence type="ECO:0000269" key="6">
    <source>
    </source>
</evidence>
<evidence type="ECO:0000269" key="7">
    <source>
    </source>
</evidence>
<evidence type="ECO:0000269" key="8">
    <source>
    </source>
</evidence>
<evidence type="ECO:0000305" key="9"/>
<evidence type="ECO:0000312" key="10">
    <source>
        <dbReference type="ZFIN" id="ZDB-GENE-040219-1"/>
    </source>
</evidence>
<sequence length="713" mass="80332">MFLSLVVYLSKICRYLSMFSSDRLTVPEYVSSRLHNRRTAPDPRAVSPGISTDVQAVLDGSLPALRSAIRTLRSSKDTGDLEETRRAIAETFQLVEEAWVLPTVGRRVAEEICNRIRLDGGLELLLQLMQTPAVEITYESAKLLEQILVSENRDYVARMGLGVILNLTREQEDAQLARSVSGILEHMFKHTEETSAQLITNGALDTILYWCRGTDPTVLRHCAVALSNCAMYGGHRCQRLMIEKQAAEWLFPLAFSKEDELIRFHACLAVAVLAANREMEKEVVKSGTLELVEPFIASLDPDEFARNMLDSADSMQGRTAADLQHLLPLLDGTRLEGKCIAAFYLCVETSIKSRQRNTKIFQEIGAVQSLKRIVMYSSNATVCSLAKRALKMMSEEVPRRILSSVPNWKSGEVQTWLQQIGFSAFSERFQELQVDGDLLLNITEQDLIQDLGMTSGLTRKRFLRDLRVLKTYANYSTCDPNNLADWLADADPRFRQYTYGLVQSGVDRNNIVHITDQQLLTDCHVENGIHRAKILSAARRPSKPCLTDSQPKGPDVFISYRRTTGSQLASLLKVHLQLRGFSVFIDVEKLEAGRFEEKLITSVQRARNFILVLSANALDKCMGDVAMKDWVHKEIVTALNGKKNIVPVTDNFVWPDPTSLPEDMSTILKFNGIKWSHEYQEATIEKILRFLEGCPSQEKPDGAKTDKKEPQKK</sequence>
<proteinExistence type="evidence at protein level"/>
<name>SARM1_DANRE</name>
<comment type="function">
    <text evidence="2 6 7">NAD(+) hydrolase, which plays a key role in axonal degeneration following injury by regulating NAD(+) metabolism (PubMed:32001778). Acts as a negative regulator of MYD88- and TRIF-dependent toll-like receptor signaling pathway by promoting Wallerian degeneration, an injury-induced form of programmed subcellular death which involves degeneration of an axon distal to the injury site (By similarity). Wallerian degeneration is triggerred by NAD(+) depletion: in response to injury, SARM1 is activated and catalyzes cleavage of NAD(+) into ADP-D-ribose (ADPR), cyclic ADPR (cADPR) and nicotinamide; NAD(+) cleavage promoting cytoskeletal degradation and axon destruction (PubMed:28334607). Also able to hydrolyze NADP(+), but not other NAD(+)-related molecules (By similarity). Can activate neuronal cell death in response to stress (By similarity).</text>
</comment>
<comment type="catalytic activity">
    <reaction evidence="6">
        <text>NAD(+) + H2O = ADP-D-ribose + nicotinamide + H(+)</text>
        <dbReference type="Rhea" id="RHEA:16301"/>
        <dbReference type="ChEBI" id="CHEBI:15377"/>
        <dbReference type="ChEBI" id="CHEBI:15378"/>
        <dbReference type="ChEBI" id="CHEBI:17154"/>
        <dbReference type="ChEBI" id="CHEBI:57540"/>
        <dbReference type="ChEBI" id="CHEBI:57967"/>
        <dbReference type="EC" id="3.2.2.6"/>
    </reaction>
    <physiologicalReaction direction="left-to-right" evidence="6">
        <dbReference type="Rhea" id="RHEA:16302"/>
    </physiologicalReaction>
</comment>
<comment type="catalytic activity">
    <reaction evidence="2">
        <text>NAD(+) = cyclic ADP-beta-D-ribose + nicotinamide + H(+)</text>
        <dbReference type="Rhea" id="RHEA:38611"/>
        <dbReference type="ChEBI" id="CHEBI:15378"/>
        <dbReference type="ChEBI" id="CHEBI:17154"/>
        <dbReference type="ChEBI" id="CHEBI:57540"/>
        <dbReference type="ChEBI" id="CHEBI:73672"/>
    </reaction>
    <physiologicalReaction direction="left-to-right" evidence="2">
        <dbReference type="Rhea" id="RHEA:38612"/>
    </physiologicalReaction>
</comment>
<comment type="catalytic activity">
    <reaction evidence="2">
        <text>NADP(+) + H2O = ADP-D-ribose 2'-phosphate + nicotinamide + H(+)</text>
        <dbReference type="Rhea" id="RHEA:19849"/>
        <dbReference type="ChEBI" id="CHEBI:15377"/>
        <dbReference type="ChEBI" id="CHEBI:15378"/>
        <dbReference type="ChEBI" id="CHEBI:17154"/>
        <dbReference type="ChEBI" id="CHEBI:58349"/>
        <dbReference type="ChEBI" id="CHEBI:58673"/>
    </reaction>
    <physiologicalReaction direction="left-to-right" evidence="2">
        <dbReference type="Rhea" id="RHEA:19850"/>
    </physiologicalReaction>
</comment>
<comment type="activity regulation">
    <text evidence="2">Autoinhibited: in the inactive state, the enzymatic TIR domain is held apart by the autoinhibiting ARM repeats. NAD(+)-binding to ARM repeats maintains an inactive state by promoting interaction between ARM repeats and the TIR domain, thereby facilitating inhibition of the enzymatic TIR domain. Following activation, possibly by nicotinamide mononucleotide (NMN), auto-inhibitory interactions are released, allowing self-association of the TIR domains and subsequent activation of the NAD(+) hydrolase (NADase) activity. Self-association of TIR domains is facilitated by the octamer of SAM domains.</text>
</comment>
<comment type="subunit">
    <text evidence="2">Homooctamer; forms an octameric ring via SAM domains.</text>
</comment>
<comment type="subcellular location">
    <subcellularLocation>
        <location evidence="2">Cytoplasm</location>
    </subcellularLocation>
    <subcellularLocation>
        <location evidence="1">Cell projection</location>
        <location evidence="1">Axon</location>
    </subcellularLocation>
    <subcellularLocation>
        <location evidence="1">Cell projection</location>
        <location evidence="1">Dendrite</location>
    </subcellularLocation>
    <subcellularLocation>
        <location evidence="1">Synapse</location>
    </subcellularLocation>
    <subcellularLocation>
        <location evidence="2">Mitochondrion</location>
    </subcellularLocation>
    <text evidence="1">Associated with microtubules.</text>
</comment>
<comment type="domain">
    <text evidence="2">The TIR domain mediates NAD(+) hydrolase (NADase) activity. Self-association of TIR domains is required for NADase activity.</text>
</comment>
<comment type="domain">
    <text evidence="2">The ARM repeats inhibit the NAD(+) hydrolase (NADase) activity by binding to NAD(+): NAD(+)-binding to ARM repeats facilitates inhibition of the TIR domain NADase through their domain interface. In contrast to classical ARM repeats, the last helix of ARM 6 does not fold back to interact with the first two helices, but instead turns towards the N-terminus of SARM1. As a result, the two following motifs ARM 7 and ARM 8 reverse their directions and lie perpendicularly. Moreover, ARM repeats interact with different domains not only within each protomer but also of the adjacent ones.</text>
</comment>
<comment type="disruption phenotype">
    <text evidence="7 8">Absence of sarm1 provides a level of protection against axon degeneration (PubMed:32001778). Schwann cells are protected from chemotoxicity by delaying axon degeneration (PubMed:32001778). Absence of Sarm1 does not promote axon resealing (PubMed:32728661).</text>
</comment>
<comment type="similarity">
    <text evidence="9">Belongs to the SARM1 family.</text>
</comment>
<protein>
    <recommendedName>
        <fullName evidence="9">NAD(+) hydrolase SARM1</fullName>
        <shortName evidence="9">NADase SARM1</shortName>
        <ecNumber evidence="6">3.2.2.6</ecNumber>
    </recommendedName>
    <alternativeName>
        <fullName evidence="9">NADP(+) hydrolase SARM1</fullName>
        <ecNumber evidence="2">3.2.2.-</ecNumber>
    </alternativeName>
    <alternativeName>
        <fullName evidence="2">Sterile alpha and TIR motif-containing protein 1</fullName>
    </alternativeName>
</protein>
<feature type="transit peptide" description="Mitochondrion" evidence="3">
    <location>
        <begin position="1"/>
        <end status="unknown"/>
    </location>
</feature>
<feature type="chain" id="PRO_0000448790" description="NAD(+) hydrolase SARM1">
    <location>
        <begin status="unknown"/>
        <end position="713"/>
    </location>
</feature>
<feature type="repeat" description="ARM 1" evidence="3">
    <location>
        <begin position="53"/>
        <end position="96"/>
    </location>
</feature>
<feature type="repeat" description="ARM 2" evidence="3">
    <location>
        <begin position="110"/>
        <end position="149"/>
    </location>
</feature>
<feature type="repeat" description="ARM 3" evidence="3">
    <location>
        <begin position="151"/>
        <end position="189"/>
    </location>
</feature>
<feature type="repeat" description="ARM 4" evidence="3">
    <location>
        <begin position="192"/>
        <end position="231"/>
    </location>
</feature>
<feature type="repeat" description="ARM 5" evidence="3">
    <location>
        <begin position="233"/>
        <end position="276"/>
    </location>
</feature>
<feature type="repeat" description="ARM 6" evidence="3">
    <location>
        <begin position="277"/>
        <end position="310"/>
    </location>
</feature>
<feature type="repeat" description="ARM 7" evidence="3">
    <location>
        <begin position="311"/>
        <end position="350"/>
    </location>
</feature>
<feature type="repeat" description="ARM 8" evidence="3">
    <location>
        <begin position="355"/>
        <end position="398"/>
    </location>
</feature>
<feature type="domain" description="SAM 1" evidence="4">
    <location>
        <begin position="408"/>
        <end position="472"/>
    </location>
</feature>
<feature type="domain" description="SAM 2" evidence="4">
    <location>
        <begin position="478"/>
        <end position="537"/>
    </location>
</feature>
<feature type="domain" description="TIR" evidence="5">
    <location>
        <begin position="552"/>
        <end position="695"/>
    </location>
</feature>
<feature type="active site" evidence="5">
    <location>
        <position position="634"/>
    </location>
</feature>
<feature type="binding site" evidence="2">
    <location>
        <position position="99"/>
    </location>
    <ligand>
        <name>NAD(+)</name>
        <dbReference type="ChEBI" id="CHEBI:57540"/>
        <label>1</label>
        <note>inhibitor</note>
    </ligand>
</feature>
<feature type="binding site" evidence="2">
    <location>
        <position position="106"/>
    </location>
    <ligand>
        <name>NAD(+)</name>
        <dbReference type="ChEBI" id="CHEBI:57540"/>
        <label>1</label>
        <note>inhibitor</note>
    </ligand>
</feature>
<feature type="binding site" evidence="2">
    <location>
        <begin position="145"/>
        <end position="153"/>
    </location>
    <ligand>
        <name>NAD(+)</name>
        <dbReference type="ChEBI" id="CHEBI:57540"/>
        <label>1</label>
        <note>inhibitor</note>
    </ligand>
</feature>
<feature type="binding site" evidence="2">
    <location>
        <begin position="186"/>
        <end position="189"/>
    </location>
    <ligand>
        <name>NAD(+)</name>
        <dbReference type="ChEBI" id="CHEBI:57540"/>
        <label>1</label>
        <note>inhibitor</note>
    </ligand>
</feature>
<feature type="binding site" evidence="2">
    <location>
        <begin position="561"/>
        <end position="562"/>
    </location>
    <ligand>
        <name>NAD(+)</name>
        <dbReference type="ChEBI" id="CHEBI:57540"/>
        <label>2</label>
        <note>substrate</note>
    </ligand>
</feature>
<feature type="binding site" evidence="2">
    <location>
        <position position="591"/>
    </location>
    <ligand>
        <name>NAD(+)</name>
        <dbReference type="ChEBI" id="CHEBI:57540"/>
        <label>2</label>
        <note>substrate</note>
    </ligand>
</feature>
<feature type="sequence conflict" description="In Ref. 2; AAI63770." evidence="9" ref="2">
    <original>R</original>
    <variation>Q</variation>
    <location>
        <position position="107"/>
    </location>
</feature>
<gene>
    <name evidence="10" type="primary">sarm1</name>
</gene>
<organism>
    <name type="scientific">Danio rerio</name>
    <name type="common">Zebrafish</name>
    <name type="synonym">Brachydanio rerio</name>
    <dbReference type="NCBI Taxonomy" id="7955"/>
    <lineage>
        <taxon>Eukaryota</taxon>
        <taxon>Metazoa</taxon>
        <taxon>Chordata</taxon>
        <taxon>Craniata</taxon>
        <taxon>Vertebrata</taxon>
        <taxon>Euteleostomi</taxon>
        <taxon>Actinopterygii</taxon>
        <taxon>Neopterygii</taxon>
        <taxon>Teleostei</taxon>
        <taxon>Ostariophysi</taxon>
        <taxon>Cypriniformes</taxon>
        <taxon>Danionidae</taxon>
        <taxon>Danioninae</taxon>
        <taxon>Danio</taxon>
    </lineage>
</organism>